<feature type="chain" id="PRO_0000181245" description="Suppressor of cytokine signaling 3">
    <location>
        <begin position="1"/>
        <end position="225"/>
    </location>
</feature>
<feature type="domain" description="SH2" evidence="4">
    <location>
        <begin position="46"/>
        <end position="142"/>
    </location>
</feature>
<feature type="domain" description="SOCS box" evidence="5">
    <location>
        <begin position="177"/>
        <end position="224"/>
    </location>
</feature>
<feature type="region of interest" description="Kinase inhibitory region (KIR)">
    <location>
        <begin position="22"/>
        <end position="33"/>
    </location>
</feature>
<feature type="region of interest" description="Extended SH2 subdomain (ESS)">
    <location>
        <begin position="34"/>
        <end position="45"/>
    </location>
</feature>
<feature type="region of interest" description="Disordered" evidence="6">
    <location>
        <begin position="141"/>
        <end position="160"/>
    </location>
</feature>
<feature type="sequence conflict" description="In Ref. 2; CAB56083." evidence="8" ref="2">
    <original>D</original>
    <variation>G</variation>
    <location>
        <position position="75"/>
    </location>
</feature>
<feature type="sequence conflict" description="In Ref. 2; CAB56083." evidence="8" ref="2">
    <original>E</original>
    <variation>K</variation>
    <location>
        <position position="85"/>
    </location>
</feature>
<feature type="sequence conflict" description="In Ref. 2; CAB56083." evidence="8" ref="2">
    <original>F</original>
    <variation>S</variation>
    <location>
        <position position="145"/>
    </location>
</feature>
<feature type="sequence conflict" description="In Ref. 2; CAB56083." evidence="8" ref="2">
    <original>A</original>
    <variation>G</variation>
    <location>
        <position position="164"/>
    </location>
</feature>
<evidence type="ECO:0000250" key="1"/>
<evidence type="ECO:0000250" key="2">
    <source>
        <dbReference type="UniProtKB" id="O14543"/>
    </source>
</evidence>
<evidence type="ECO:0000250" key="3">
    <source>
        <dbReference type="UniProtKB" id="O35718"/>
    </source>
</evidence>
<evidence type="ECO:0000255" key="4">
    <source>
        <dbReference type="PROSITE-ProRule" id="PRU00191"/>
    </source>
</evidence>
<evidence type="ECO:0000255" key="5">
    <source>
        <dbReference type="PROSITE-ProRule" id="PRU00194"/>
    </source>
</evidence>
<evidence type="ECO:0000256" key="6">
    <source>
        <dbReference type="SAM" id="MobiDB-lite"/>
    </source>
</evidence>
<evidence type="ECO:0000269" key="7">
    <source>
    </source>
</evidence>
<evidence type="ECO:0000305" key="8"/>
<evidence type="ECO:0000312" key="9">
    <source>
        <dbReference type="RGD" id="621087"/>
    </source>
</evidence>
<name>SOCS3_RAT</name>
<dbReference type="EMBL" id="AF075383">
    <property type="protein sequence ID" value="AAC26223.1"/>
    <property type="molecule type" value="mRNA"/>
</dbReference>
<dbReference type="EMBL" id="AJ249240">
    <property type="protein sequence ID" value="CAB56083.1"/>
    <property type="molecule type" value="Genomic_DNA"/>
</dbReference>
<dbReference type="RefSeq" id="NP_446017.1">
    <property type="nucleotide sequence ID" value="NM_053565.1"/>
</dbReference>
<dbReference type="BMRB" id="O88583"/>
<dbReference type="SMR" id="O88583"/>
<dbReference type="BioGRID" id="250151">
    <property type="interactions" value="1"/>
</dbReference>
<dbReference type="FunCoup" id="O88583">
    <property type="interactions" value="542"/>
</dbReference>
<dbReference type="STRING" id="10116.ENSRNOP00000003940"/>
<dbReference type="PhosphoSitePlus" id="O88583"/>
<dbReference type="PaxDb" id="10116-ENSRNOP00000003940"/>
<dbReference type="GeneID" id="89829"/>
<dbReference type="KEGG" id="rno:89829"/>
<dbReference type="UCSC" id="RGD:621087">
    <property type="organism name" value="rat"/>
</dbReference>
<dbReference type="AGR" id="RGD:621087"/>
<dbReference type="CTD" id="9021"/>
<dbReference type="RGD" id="621087">
    <property type="gene designation" value="Socs3"/>
</dbReference>
<dbReference type="eggNOG" id="KOG4566">
    <property type="taxonomic scope" value="Eukaryota"/>
</dbReference>
<dbReference type="InParanoid" id="O88583"/>
<dbReference type="OrthoDB" id="6426624at2759"/>
<dbReference type="PhylomeDB" id="O88583"/>
<dbReference type="Reactome" id="R-RNO-1059683">
    <property type="pathway name" value="Interleukin-6 signaling"/>
</dbReference>
<dbReference type="Reactome" id="R-RNO-877300">
    <property type="pathway name" value="Interferon gamma signaling"/>
</dbReference>
<dbReference type="Reactome" id="R-RNO-877312">
    <property type="pathway name" value="Regulation of IFNG signaling"/>
</dbReference>
<dbReference type="Reactome" id="R-RNO-8849474">
    <property type="pathway name" value="PTK6 Activates STAT3"/>
</dbReference>
<dbReference type="Reactome" id="R-RNO-8951664">
    <property type="pathway name" value="Neddylation"/>
</dbReference>
<dbReference type="Reactome" id="R-RNO-909733">
    <property type="pathway name" value="Interferon alpha/beta signaling"/>
</dbReference>
<dbReference type="Reactome" id="R-RNO-9705462">
    <property type="pathway name" value="Inactivation of CSF3 (G-CSF) signaling"/>
</dbReference>
<dbReference type="Reactome" id="R-RNO-983168">
    <property type="pathway name" value="Antigen processing: Ubiquitination &amp; Proteasome degradation"/>
</dbReference>
<dbReference type="UniPathway" id="UPA00143"/>
<dbReference type="PRO" id="PR:O88583"/>
<dbReference type="Proteomes" id="UP000002494">
    <property type="component" value="Unplaced"/>
</dbReference>
<dbReference type="GO" id="GO:0009898">
    <property type="term" value="C:cytoplasmic side of plasma membrane"/>
    <property type="evidence" value="ECO:0000266"/>
    <property type="project" value="RGD"/>
</dbReference>
<dbReference type="GO" id="GO:0005126">
    <property type="term" value="F:cytokine receptor binding"/>
    <property type="evidence" value="ECO:0000318"/>
    <property type="project" value="GO_Central"/>
</dbReference>
<dbReference type="GO" id="GO:0035198">
    <property type="term" value="F:miRNA binding"/>
    <property type="evidence" value="ECO:0000266"/>
    <property type="project" value="RGD"/>
</dbReference>
<dbReference type="GO" id="GO:0001784">
    <property type="term" value="F:phosphotyrosine residue binding"/>
    <property type="evidence" value="ECO:0000266"/>
    <property type="project" value="RGD"/>
</dbReference>
<dbReference type="GO" id="GO:0030292">
    <property type="term" value="F:protein tyrosine kinase inhibitor activity"/>
    <property type="evidence" value="ECO:0000266"/>
    <property type="project" value="RGD"/>
</dbReference>
<dbReference type="GO" id="GO:0031100">
    <property type="term" value="P:animal organ regeneration"/>
    <property type="evidence" value="ECO:0000270"/>
    <property type="project" value="RGD"/>
</dbReference>
<dbReference type="GO" id="GO:0060670">
    <property type="term" value="P:branching involved in labyrinthine layer morphogenesis"/>
    <property type="evidence" value="ECO:0000266"/>
    <property type="project" value="RGD"/>
</dbReference>
<dbReference type="GO" id="GO:0030154">
    <property type="term" value="P:cell differentiation"/>
    <property type="evidence" value="ECO:0000266"/>
    <property type="project" value="RGD"/>
</dbReference>
<dbReference type="GO" id="GO:0007259">
    <property type="term" value="P:cell surface receptor signaling pathway via JAK-STAT"/>
    <property type="evidence" value="ECO:0000314"/>
    <property type="project" value="RGD"/>
</dbReference>
<dbReference type="GO" id="GO:0097398">
    <property type="term" value="P:cellular response to interleukin-17"/>
    <property type="evidence" value="ECO:0000266"/>
    <property type="project" value="RGD"/>
</dbReference>
<dbReference type="GO" id="GO:1990830">
    <property type="term" value="P:cellular response to leukemia inhibitory factor"/>
    <property type="evidence" value="ECO:0000266"/>
    <property type="project" value="RGD"/>
</dbReference>
<dbReference type="GO" id="GO:1905229">
    <property type="term" value="P:cellular response to thyrotropin-releasing hormone"/>
    <property type="evidence" value="ECO:0000270"/>
    <property type="project" value="RGD"/>
</dbReference>
<dbReference type="GO" id="GO:0071346">
    <property type="term" value="P:cellular response to type II interferon"/>
    <property type="evidence" value="ECO:0000270"/>
    <property type="project" value="RGD"/>
</dbReference>
<dbReference type="GO" id="GO:0019221">
    <property type="term" value="P:cytokine-mediated signaling pathway"/>
    <property type="evidence" value="ECO:0000318"/>
    <property type="project" value="GO_Central"/>
</dbReference>
<dbReference type="GO" id="GO:0035556">
    <property type="term" value="P:intracellular signal transduction"/>
    <property type="evidence" value="ECO:0000314"/>
    <property type="project" value="RGD"/>
</dbReference>
<dbReference type="GO" id="GO:0050728">
    <property type="term" value="P:negative regulation of inflammatory response"/>
    <property type="evidence" value="ECO:0000266"/>
    <property type="project" value="RGD"/>
</dbReference>
<dbReference type="GO" id="GO:0046627">
    <property type="term" value="P:negative regulation of insulin receptor signaling pathway"/>
    <property type="evidence" value="ECO:0000266"/>
    <property type="project" value="RGD"/>
</dbReference>
<dbReference type="GO" id="GO:0046426">
    <property type="term" value="P:negative regulation of receptor signaling pathway via JAK-STAT"/>
    <property type="evidence" value="ECO:0000266"/>
    <property type="project" value="RGD"/>
</dbReference>
<dbReference type="GO" id="GO:0009968">
    <property type="term" value="P:negative regulation of signal transduction"/>
    <property type="evidence" value="ECO:0000266"/>
    <property type="project" value="RGD"/>
</dbReference>
<dbReference type="GO" id="GO:0060674">
    <property type="term" value="P:placenta blood vessel development"/>
    <property type="evidence" value="ECO:0000266"/>
    <property type="project" value="RGD"/>
</dbReference>
<dbReference type="GO" id="GO:0045597">
    <property type="term" value="P:positive regulation of cell differentiation"/>
    <property type="evidence" value="ECO:0000266"/>
    <property type="project" value="RGD"/>
</dbReference>
<dbReference type="GO" id="GO:0016567">
    <property type="term" value="P:protein ubiquitination"/>
    <property type="evidence" value="ECO:0007669"/>
    <property type="project" value="UniProtKB-UniPathway"/>
</dbReference>
<dbReference type="GO" id="GO:0009617">
    <property type="term" value="P:response to bacterium"/>
    <property type="evidence" value="ECO:0000270"/>
    <property type="project" value="RGD"/>
</dbReference>
<dbReference type="GO" id="GO:0034097">
    <property type="term" value="P:response to cytokine"/>
    <property type="evidence" value="ECO:0000270"/>
    <property type="project" value="RGD"/>
</dbReference>
<dbReference type="GO" id="GO:0032355">
    <property type="term" value="P:response to estradiol"/>
    <property type="evidence" value="ECO:0000270"/>
    <property type="project" value="RGD"/>
</dbReference>
<dbReference type="GO" id="GO:0032094">
    <property type="term" value="P:response to food"/>
    <property type="evidence" value="ECO:0000270"/>
    <property type="project" value="RGD"/>
</dbReference>
<dbReference type="GO" id="GO:0010332">
    <property type="term" value="P:response to gamma radiation"/>
    <property type="evidence" value="ECO:0000270"/>
    <property type="project" value="RGD"/>
</dbReference>
<dbReference type="GO" id="GO:0051384">
    <property type="term" value="P:response to glucocorticoid"/>
    <property type="evidence" value="ECO:0000270"/>
    <property type="project" value="RGD"/>
</dbReference>
<dbReference type="GO" id="GO:0009725">
    <property type="term" value="P:response to hormone"/>
    <property type="evidence" value="ECO:0000270"/>
    <property type="project" value="RGD"/>
</dbReference>
<dbReference type="GO" id="GO:0001666">
    <property type="term" value="P:response to hypoxia"/>
    <property type="evidence" value="ECO:0000270"/>
    <property type="project" value="RGD"/>
</dbReference>
<dbReference type="GO" id="GO:0032868">
    <property type="term" value="P:response to insulin"/>
    <property type="evidence" value="ECO:0000270"/>
    <property type="project" value="RGD"/>
</dbReference>
<dbReference type="GO" id="GO:0032496">
    <property type="term" value="P:response to lipopolysaccharide"/>
    <property type="evidence" value="ECO:0000270"/>
    <property type="project" value="RGD"/>
</dbReference>
<dbReference type="GO" id="GO:0043434">
    <property type="term" value="P:response to peptide hormone"/>
    <property type="evidence" value="ECO:0000270"/>
    <property type="project" value="RGD"/>
</dbReference>
<dbReference type="GO" id="GO:0032570">
    <property type="term" value="P:response to progesterone"/>
    <property type="evidence" value="ECO:0000270"/>
    <property type="project" value="RGD"/>
</dbReference>
<dbReference type="GO" id="GO:0009410">
    <property type="term" value="P:response to xenobiotic stimulus"/>
    <property type="evidence" value="ECO:0000270"/>
    <property type="project" value="RGD"/>
</dbReference>
<dbReference type="GO" id="GO:0007165">
    <property type="term" value="P:signal transduction"/>
    <property type="evidence" value="ECO:0000266"/>
    <property type="project" value="RGD"/>
</dbReference>
<dbReference type="CDD" id="cd10384">
    <property type="entry name" value="SH2_SOCS3"/>
    <property type="match status" value="1"/>
</dbReference>
<dbReference type="CDD" id="cd03737">
    <property type="entry name" value="SOCS_SOCS3"/>
    <property type="match status" value="1"/>
</dbReference>
<dbReference type="FunFam" id="3.30.505.10:FF:000066">
    <property type="entry name" value="suppressor of cytokine signaling 3"/>
    <property type="match status" value="1"/>
</dbReference>
<dbReference type="Gene3D" id="3.30.505.10">
    <property type="entry name" value="SH2 domain"/>
    <property type="match status" value="1"/>
</dbReference>
<dbReference type="Gene3D" id="1.10.750.20">
    <property type="entry name" value="SOCS box"/>
    <property type="match status" value="1"/>
</dbReference>
<dbReference type="InterPro" id="IPR000980">
    <property type="entry name" value="SH2"/>
</dbReference>
<dbReference type="InterPro" id="IPR036860">
    <property type="entry name" value="SH2_dom_sf"/>
</dbReference>
<dbReference type="InterPro" id="IPR035863">
    <property type="entry name" value="SOCS3_SH2"/>
</dbReference>
<dbReference type="InterPro" id="IPR028414">
    <property type="entry name" value="SOCS3_SOCS_box"/>
</dbReference>
<dbReference type="InterPro" id="IPR001496">
    <property type="entry name" value="SOCS_box"/>
</dbReference>
<dbReference type="InterPro" id="IPR036036">
    <property type="entry name" value="SOCS_box-like_dom_sf"/>
</dbReference>
<dbReference type="PANTHER" id="PTHR10155">
    <property type="entry name" value="PHOSPHATIDYLINOSITOL 3-KINASE REGULATORY SUBUNIT"/>
    <property type="match status" value="1"/>
</dbReference>
<dbReference type="PANTHER" id="PTHR10155:SF11">
    <property type="entry name" value="SUPPRESSOR OF CYTOKINE SIGNALING 3"/>
    <property type="match status" value="1"/>
</dbReference>
<dbReference type="Pfam" id="PF00017">
    <property type="entry name" value="SH2"/>
    <property type="match status" value="1"/>
</dbReference>
<dbReference type="SMART" id="SM00252">
    <property type="entry name" value="SH2"/>
    <property type="match status" value="1"/>
</dbReference>
<dbReference type="SMART" id="SM00253">
    <property type="entry name" value="SOCS"/>
    <property type="match status" value="1"/>
</dbReference>
<dbReference type="SMART" id="SM00969">
    <property type="entry name" value="SOCS_box"/>
    <property type="match status" value="1"/>
</dbReference>
<dbReference type="SUPFAM" id="SSF55550">
    <property type="entry name" value="SH2 domain"/>
    <property type="match status" value="1"/>
</dbReference>
<dbReference type="SUPFAM" id="SSF158235">
    <property type="entry name" value="SOCS box-like"/>
    <property type="match status" value="1"/>
</dbReference>
<dbReference type="PROSITE" id="PS50001">
    <property type="entry name" value="SH2"/>
    <property type="match status" value="1"/>
</dbReference>
<dbReference type="PROSITE" id="PS50225">
    <property type="entry name" value="SOCS"/>
    <property type="match status" value="1"/>
</dbReference>
<reference key="1">
    <citation type="journal article" date="1999" name="Endocrinology">
        <title>Endotoxin-induced inhibition of growth hormone receptor signaling in rat liver in vivo.</title>
        <authorList>
            <person name="Mao Y."/>
            <person name="Ling P.R."/>
            <person name="Fitzgibbons T.P."/>
            <person name="McCowen K.C."/>
            <person name="Frick G.P."/>
            <person name="Bistrian B.R."/>
            <person name="Smith R.J."/>
        </authorList>
    </citation>
    <scope>NUCLEOTIDE SEQUENCE [MRNA]</scope>
    <source>
        <strain>Sprague-Dawley</strain>
        <tissue>Liver</tissue>
    </source>
</reference>
<reference key="2">
    <citation type="submission" date="1999-08" db="EMBL/GenBank/DDBJ databases">
        <authorList>
            <person name="le Cam A."/>
        </authorList>
    </citation>
    <scope>NUCLEOTIDE SEQUENCE [GENOMIC DNA]</scope>
    <source>
        <strain>Sprague-Dawley</strain>
    </source>
</reference>
<reference key="3">
    <citation type="journal article" date="2000" name="FEBS Lett.">
        <title>Identification of the Y985 and Y1077 motifs as SOCS3 recruitment sites in the murine leptin receptor.</title>
        <authorList>
            <person name="Eyckerman S."/>
            <person name="Broekaert D."/>
            <person name="Verhee A."/>
            <person name="Vandekerckhove J."/>
            <person name="Tavernier J."/>
        </authorList>
    </citation>
    <scope>INTERACTION WITH LEPTIN</scope>
</reference>
<proteinExistence type="evidence at protein level"/>
<comment type="function">
    <text evidence="2 3">SOCS family proteins form part of a classical negative feedback system that regulates cytokine signal transduction. SOCS3 is involved in negative regulation of cytokines that signal through the JAK/STAT pathway. Inhibits cytokine signal transduction by binding to tyrosine kinase receptors including IL6ST/gp130, LIF, erythropoietin, insulin, IL12, GCSF and leptin receptors. Binding to JAK2 inhibits its kinase activity and regulates IL6 signaling. Suppresses fetal liver erythropoiesis. Regulates onset and maintenance of allergic responses mediated by T-helper type 2 cells (By similarity). Probable substrate recognition component of a SCF-like ECS (Elongin BC-CUL2/5-SOCS-box protein) E3 ubiquitin-protein ligase complex which mediates the ubiquitination and subsequent proteasomal degradation of target proteins (By similarity).</text>
</comment>
<comment type="pathway">
    <text>Protein modification; protein ubiquitination.</text>
</comment>
<comment type="subunit">
    <text evidence="2 3 7">Interacts with multiple activated proteins of the tyrosine kinase signaling pathway including IGF1 receptor, insulin receptor and JAK2. Binding to JAK2 is mediated through the KIR and SH2 domains to a phosphorylated tyrosine residue within the JAK2 JH1 domain. Binds specific activated tyrosine residues of the leptin, EPO, IL12, GSCF and gp130 receptors. Interaction with CSNK1E stabilize SOCS3 protein. Component of the probable ECS(SOCS3) E3 ubiquitin-protein ligase complex which contains CUL5, RNF7/RBX2, Elongin BC complex and SOCS3. Interacts with CUL5, RNF7, ELOB and ELOC. Interacts with FGFR3 (By similarity). Interacts with INSR (By similarity). Interacts with BCL10; this interaction may interfere with BCL10-binding with PELI2 (By similarity). Interacts with NOD2 (via CARD domain); the interaction promotes NOD2 degradation (By similarity).</text>
</comment>
<comment type="domain">
    <text>The ESS and SH2 domains are required for JAK phosphotyrosine binding. Further interaction with the KIR domain is necessary for signal and kinase inhibition.</text>
</comment>
<comment type="domain">
    <text evidence="1">The SOCS box domain mediates the interaction with the Elongin BC complex, an adapter module in different E3 ubiquitin ligase complexes.</text>
</comment>
<comment type="PTM">
    <text evidence="1">Phosphorylated on tyrosine residues after stimulation by the cytokines, IL-2, EPO or IGF1.</text>
</comment>
<sequence length="225" mass="24808">MVTHSKFPAAGMSRPLDTSLRLKTFSSKSEYQLVVNAVRKLQESGFYWSAVTGGEANLLLSAEPAGTFLIRDSSDQRHFFTLSVETQSGTKNLRIQCEGGSFSLQSDPRSTQPVPRFDCVLKLVHHYMPPPGAPSFSLPPTEPSFEVQEQPPAQALPGGTPKRAYYIYSGGEKIPLVLSRPLSSNVATLQHLCRKTVNGHLDSYEKVTQLPGPIREFLDQYDAPL</sequence>
<keyword id="KW-0341">Growth regulation</keyword>
<keyword id="KW-0597">Phosphoprotein</keyword>
<keyword id="KW-1185">Reference proteome</keyword>
<keyword id="KW-0727">SH2 domain</keyword>
<keyword id="KW-0734">Signal transduction inhibitor</keyword>
<keyword id="KW-0833">Ubl conjugation pathway</keyword>
<gene>
    <name evidence="9" type="primary">Socs3</name>
    <name type="synonym">Cish3</name>
</gene>
<accession>O88583</accession>
<accession>Q9QYV5</accession>
<organism>
    <name type="scientific">Rattus norvegicus</name>
    <name type="common">Rat</name>
    <dbReference type="NCBI Taxonomy" id="10116"/>
    <lineage>
        <taxon>Eukaryota</taxon>
        <taxon>Metazoa</taxon>
        <taxon>Chordata</taxon>
        <taxon>Craniata</taxon>
        <taxon>Vertebrata</taxon>
        <taxon>Euteleostomi</taxon>
        <taxon>Mammalia</taxon>
        <taxon>Eutheria</taxon>
        <taxon>Euarchontoglires</taxon>
        <taxon>Glires</taxon>
        <taxon>Rodentia</taxon>
        <taxon>Myomorpha</taxon>
        <taxon>Muroidea</taxon>
        <taxon>Muridae</taxon>
        <taxon>Murinae</taxon>
        <taxon>Rattus</taxon>
    </lineage>
</organism>
<protein>
    <recommendedName>
        <fullName evidence="8">Suppressor of cytokine signaling 3</fullName>
        <shortName>SOCS-3</shortName>
    </recommendedName>
    <alternativeName>
        <fullName>Cytokine-inducible SH2 protein 3</fullName>
    </alternativeName>
</protein>